<sequence>MGCIKSKRKDNLNDDGVDMKTQPVRNTDRTIYVRDPTSNKQQRPVPESQLLPGQRFQAKDPEEQGDIVVALYPYDGIHPDDLSFKKGEKMKVLEEHGEWWKAKSLSSKREGFIPSNYVAKVNTLETEEWFFKDITRKDAERQLLAPGNSAGAFLIRESETLKGSFSLSVRDYDPMHGDVIKHYKIRSLDNGGYYISPRITFPCISDMIKHYQKQSDGLCRRLEKACISPKPQKPWDKDAWEIPRESIKLVKKLGAGQFGEVWMGYYNNSTKVAVKTLKPGTMSAQAFLEEANLMKTLQHDKLVRLYAVVTKEEPIYIITEFMAKGSLLDFLKSDEGSKVLLPKLIDFSAQIAEGMAYIERKNYIHRDLRAANVLVSESLMCKIADFGLARVIEDNEYTAREGAKFPIKWTAPEAINFGCFTIKSDVWSFGILLYEIVTYGKIPYPGRTNADVMTALSQGYRMPRMENCPDELYDIMKMCWKESAEERPTFDYLQSVLDDFYTATEGQYQQQP</sequence>
<comment type="function">
    <text evidence="2 3">Non-receptor tyrosine-protein kinase that transmits signals from cell surface receptors and plays an important role in the regulation of innate and adaptive immune responses, hematopoiesis, responses to growth factors and cytokines, integrin signaling, but also responses to DNA damage and genotoxic agents. Functions primarily as negative regulator, but can also function as activator, depending on the context. Required for the initiation of the B-cell response, but also for its down-regulation and termination. Plays an important role in the regulation of B-cell differentiation, proliferation, survival and apoptosis, and is important for immune self-tolerance. Acts downstream of several immune receptors, including the B-cell receptor, CD79A, CD79B, CD5, CD19, CD22, FCER1, FCGR2, FCGR1A, TLR2 and TLR4. Plays a role in the inflammatory response to bacterial lipopolysaccharide. Mediates the responses to cytokines and growth factors in hematopoietic progenitors, platelets, erythrocytes, and in mature myeloid cells, such as dendritic cells, neutrophils and eosinophils. Acts downstream of EPOR, KIT, MPL, the chemokine receptor CXCR4, as well as the receptors for IL3, IL5 and CSF2. Plays an important role in integrin signaling. Regulates cell proliferation, survival, differentiation, migration, adhesion, degranulation, and cytokine release. Involved in the regulation of endothelial activation, neutrophil adhesion and transendothelial migration (By similarity). Down-regulates signaling pathways by phosphorylation of immunoreceptor tyrosine-based inhibitory motifs (ITIM), that then serve as binding sites for phosphatases, such as PTPN6/SHP-1, PTPN11/SHP-2 and INPP5D/SHIP-1, that modulate signaling by dephosphorylation of kinases and their substrates. Phosphorylates LIME1 in response to CD22 activation. Phosphorylates BTK, CBL, CD5, CD19, CD72, CD79A, CD79B, CSF2RB, DOK1, HCLS1, LILRB3/PIR-B, MS4A2/FCER1B, SYK and TEC. Promotes phosphorylation of SIRPA, PTPN6/SHP-1, PTPN11/SHP-2 and INPP5D/SHIP-1. Required for rapid phosphorylation of FER in response to FCER1 activation. Mediates KIT phosphorylation. Acts as an effector of EPOR (erythropoietin receptor) in controlling KIT expression and may play a role in erythroid differentiation during the switch between proliferation and maturation. Depending on the context, activates or inhibits several signaling cascades. Regulates phosphatidylinositol 3-kinase activity and AKT1 activation. Regulates activation of the MAP kinase signaling cascade, including activation of MAP2K1/MEK1, MAPK1/ERK2, MAPK3/ERK1, MAPK8/JNK1 and MAPK9/JNK2. Mediates activation of STAT5A and/or STAT5B (By similarity). Phosphorylates LPXN on 'Tyr-72' (By similarity). Kinase activity facilitates TLR4-TLR6 heterodimerization and signal initiation. Phosphorylates SCIMP on 'Tyr-96'; this enhances binding of SCIMP to TLR4, promoting the phosphorylation of TLR4, and a selective cytokine response to lipopolysaccharide in macrophages (By similarity). Phosphorylates CLNK (By similarity). Phosphorylates BCAR1/CAS and NEDD9/HEF1 (By similarity).</text>
</comment>
<comment type="catalytic activity">
    <reaction evidence="7 9">
        <text>L-tyrosyl-[protein] + ATP = O-phospho-L-tyrosyl-[protein] + ADP + H(+)</text>
        <dbReference type="Rhea" id="RHEA:10596"/>
        <dbReference type="Rhea" id="RHEA-COMP:10136"/>
        <dbReference type="Rhea" id="RHEA-COMP:20101"/>
        <dbReference type="ChEBI" id="CHEBI:15378"/>
        <dbReference type="ChEBI" id="CHEBI:30616"/>
        <dbReference type="ChEBI" id="CHEBI:46858"/>
        <dbReference type="ChEBI" id="CHEBI:61978"/>
        <dbReference type="ChEBI" id="CHEBI:456216"/>
        <dbReference type="EC" id="2.7.10.2"/>
    </reaction>
</comment>
<comment type="activity regulation">
    <text evidence="9">Subject to autoinhibition, mediated by intramolecular interactions between the SH2 domain and the C-terminal phosphotyrosine. Phosphorylation at Tyr-397 is required for optimal activity. Phosphorylated by CSK at Tyr-508; phosphorylation at Tyr-508 inhibits kinase activity. Kinase activity is modulated by dephosphorylation by PTPRC/CD45.</text>
</comment>
<comment type="subunit">
    <text evidence="1 2 3">Interacts with TEC. Interacts (via SH2 domain) with FLT3 (tyrosine phosphorylated). Interacts with LIME1 and with CD79A upon activation of the B-cell antigen receptor. Interacts with the B-cell receptor complex. Interacts with phosphorylated THEMIS2. Interacts with EPOR. Interacts with MS4A2/FCER1B. Interaction (via the SH2 and SH3 domains) with MUC1 is stimulated by IL7 and the subsequent phosphorylation increases the binding between MUC1 and CTNNB1/beta-catenin. Interacts with ADAM15. Interacts with NDFIP2 and more weakly with NDFIP1. Interacts with FASLG. Interacts with KIT. Interacts with HCLS1. Interacts with FCGR2B. Interacts with FCGR1A; the interaction may be indirect. Interacts with CD19, CD22, CD79A and CD79B. Interacts (via SH3 domain) with CBLC, PPP1R15A and PDE4A. Interacts with TGFB1I1. Interacts (via SH3 domain) with PIK3R1, the regulatory subunit of phosphatidylinositol 3-kinase; this interaction enhances phosphatidylinositol 3-kinase activity. Interacts with CSF2RB, the common subunit of the IL3, IL5 and CSF2 receptors. Interacts with PAG1; identified in a complex with PAG1 and STAT3. Interacts with ABL1. Interacts with PTPN6/SHP-1. Interacts (via SH3 domain) with SCIMP (via proline-rich region) (By similarity). This interaction facilitates the phosphorylation of SCIMP 'Tyr-96', which enhances binding of SCIMP to TLR4, and consequently the phosphorylation of TLR4 in response to stimulation by lipopolysaccharide in macrophages (By similarity). Interacts with LPXN (via LD motif 3) and the interaction is induced upon B-cell antigen receptor (BCR) activation. Interacts (via SH3-domain) with ANKRD54 (via ankyrin repeat region) in an activation-independent status of LYN. Forms a multiprotein complex with ANKRD54 and HCLS1 (By similarity). Interacts (via SH2 and SH3 domains) with UNC119; leading to LYN activation (By similarity). Interacts with CD36. Interacts with LYN (By similarity). Interacts with SKAP1 and FYB1; this interaction promotes the phosphorylation of CLNK (By similarity). Interacts with BCAR1/CAS and NEDD9/HEF1 (By similarity).</text>
</comment>
<comment type="subcellular location">
    <subcellularLocation>
        <location evidence="1">Cell membrane</location>
    </subcellularLocation>
    <subcellularLocation>
        <location evidence="1">Nucleus</location>
    </subcellularLocation>
    <subcellularLocation>
        <location evidence="1">Cytoplasm</location>
    </subcellularLocation>
    <subcellularLocation>
        <location evidence="1">Cytoplasm</location>
        <location evidence="1">Perinuclear region</location>
    </subcellularLocation>
    <subcellularLocation>
        <location evidence="1">Golgi apparatus</location>
    </subcellularLocation>
    <subcellularLocation>
        <location evidence="2">Membrane</location>
        <topology evidence="2">Lipid-anchor</topology>
    </subcellularLocation>
    <text evidence="1">Accumulates in the nucleus by inhibition of Crm1-mediated nuclear export. Nuclear accumulation is increased by inhibition of its kinase activity. The trafficking from the Golgi apparatus to the cell membrane occurs in a kinase domain-dependent but kinase activity independent manner and is mediated by exocytic vesicular transport (By similarity).</text>
</comment>
<comment type="alternative products">
    <event type="alternative splicing"/>
    <isoform>
        <id>Q07014-1</id>
        <name>LYN A</name>
        <sequence type="displayed"/>
    </isoform>
    <isoform>
        <id>Q07014-2</id>
        <name>LYN B</name>
        <sequence type="described" ref="VSP_005004"/>
    </isoform>
</comment>
<comment type="tissue specificity">
    <text evidence="9">Detected in spleen (at protein level). Expressed predominantly in B-lymphoid and myeloid cells.</text>
</comment>
<comment type="domain">
    <text evidence="1">The protein kinase domain plays an important role in its localization in the cell membrane.</text>
</comment>
<comment type="PTM">
    <text evidence="1">Ubiquitinated. Ubiquitination is SH3-dependent (By similarity).</text>
</comment>
<comment type="PTM">
    <text evidence="2 3">Autophosphorylated (By similarity). Phosphorylated on tyrosine residues in response to KIT signaling (By similarity). Phosphorylation at Tyr-397 is required for optimal activity (By similarity). Phosphorylation at Tyr-508 inhibits kinase activity (By similarity). Phosphorylated at Tyr-508 by CSK (By similarity). Dephosphorylated by PTPRC/CD45 (By similarity). Becomes rapidly phosphorylated upon activation of the B-cell receptor and the immunoglobulin receptor FCGR1A (By similarity). Phosphorylated in response to integrin ITGB1 in B-cells (By similarity).</text>
</comment>
<comment type="similarity">
    <text evidence="4">Belongs to the protein kinase superfamily. Tyr protein kinase family. SRC subfamily.</text>
</comment>
<feature type="initiator methionine" description="Removed" evidence="2">
    <location>
        <position position="1"/>
    </location>
</feature>
<feature type="chain" id="PRO_0000088131" description="Tyrosine-protein kinase Lyn">
    <location>
        <begin position="2"/>
        <end position="512"/>
    </location>
</feature>
<feature type="domain" description="SH3" evidence="6">
    <location>
        <begin position="63"/>
        <end position="123"/>
    </location>
</feature>
<feature type="domain" description="SH2" evidence="5">
    <location>
        <begin position="129"/>
        <end position="226"/>
    </location>
</feature>
<feature type="domain" description="Protein kinase" evidence="4">
    <location>
        <begin position="247"/>
        <end position="501"/>
    </location>
</feature>
<feature type="region of interest" description="Disordered" evidence="8">
    <location>
        <begin position="1"/>
        <end position="50"/>
    </location>
</feature>
<feature type="active site" description="Proton acceptor" evidence="4 7">
    <location>
        <position position="367"/>
    </location>
</feature>
<feature type="binding site" evidence="4">
    <location>
        <begin position="253"/>
        <end position="261"/>
    </location>
    <ligand>
        <name>ATP</name>
        <dbReference type="ChEBI" id="CHEBI:30616"/>
    </ligand>
</feature>
<feature type="binding site" evidence="4">
    <location>
        <position position="275"/>
    </location>
    <ligand>
        <name>ATP</name>
        <dbReference type="ChEBI" id="CHEBI:30616"/>
    </ligand>
</feature>
<feature type="modified residue" description="Phosphotyrosine" evidence="2">
    <location>
        <position position="193"/>
    </location>
</feature>
<feature type="modified residue" description="Phosphoserine" evidence="2">
    <location>
        <position position="228"/>
    </location>
</feature>
<feature type="modified residue" description="Phosphotyrosine" evidence="2">
    <location>
        <position position="306"/>
    </location>
</feature>
<feature type="modified residue" description="Phosphotyrosine" evidence="11">
    <location>
        <position position="316"/>
    </location>
</feature>
<feature type="modified residue" description="Phosphotyrosine; by autocatalysis" evidence="9">
    <location>
        <position position="397"/>
    </location>
</feature>
<feature type="modified residue" description="Phosphotyrosine" evidence="2">
    <location>
        <position position="460"/>
    </location>
</feature>
<feature type="modified residue" description="Phosphotyrosine" evidence="2">
    <location>
        <position position="473"/>
    </location>
</feature>
<feature type="modified residue" description="Phosphotyrosine; by autocatalysis, CSK and MATK" evidence="9 11">
    <location>
        <position position="508"/>
    </location>
</feature>
<feature type="lipid moiety-binding region" description="N-myristoyl glycine" evidence="2">
    <location>
        <position position="2"/>
    </location>
</feature>
<feature type="lipid moiety-binding region" description="S-palmitoyl cysteine" evidence="1">
    <location>
        <position position="3"/>
    </location>
</feature>
<feature type="splice variant" id="VSP_005004" description="In isoform LYN B." evidence="10">
    <location>
        <begin position="25"/>
        <end position="45"/>
    </location>
</feature>
<feature type="sequence conflict" description="In Ref. 2; AAA20944/AAA20945." evidence="10" ref="2">
    <original>P</original>
    <variation>L</variation>
    <location>
        <position position="231"/>
    </location>
</feature>
<feature type="sequence conflict" description="In Ref. 2; AAA20944/AAA20945." evidence="10" ref="2">
    <original>V</original>
    <variation>A</variation>
    <location>
        <position position="308"/>
    </location>
</feature>
<feature type="sequence conflict" description="In Ref. 2; AAA20944/AAA20945." evidence="10" ref="2">
    <original>C</original>
    <variation>Y</variation>
    <location>
        <position position="419"/>
    </location>
</feature>
<keyword id="KW-1064">Adaptive immunity</keyword>
<keyword id="KW-0025">Alternative splicing</keyword>
<keyword id="KW-0067">ATP-binding</keyword>
<keyword id="KW-1003">Cell membrane</keyword>
<keyword id="KW-0963">Cytoplasm</keyword>
<keyword id="KW-0333">Golgi apparatus</keyword>
<keyword id="KW-0391">Immunity</keyword>
<keyword id="KW-0395">Inflammatory response</keyword>
<keyword id="KW-0399">Innate immunity</keyword>
<keyword id="KW-0418">Kinase</keyword>
<keyword id="KW-0449">Lipoprotein</keyword>
<keyword id="KW-0472">Membrane</keyword>
<keyword id="KW-0519">Myristate</keyword>
<keyword id="KW-0547">Nucleotide-binding</keyword>
<keyword id="KW-0539">Nucleus</keyword>
<keyword id="KW-0564">Palmitate</keyword>
<keyword id="KW-0597">Phosphoprotein</keyword>
<keyword id="KW-0656">Proto-oncogene</keyword>
<keyword id="KW-1185">Reference proteome</keyword>
<keyword id="KW-0727">SH2 domain</keyword>
<keyword id="KW-0728">SH3 domain</keyword>
<keyword id="KW-0808">Transferase</keyword>
<keyword id="KW-0829">Tyrosine-protein kinase</keyword>
<keyword id="KW-0832">Ubl conjugation</keyword>
<organism>
    <name type="scientific">Rattus norvegicus</name>
    <name type="common">Rat</name>
    <dbReference type="NCBI Taxonomy" id="10116"/>
    <lineage>
        <taxon>Eukaryota</taxon>
        <taxon>Metazoa</taxon>
        <taxon>Chordata</taxon>
        <taxon>Craniata</taxon>
        <taxon>Vertebrata</taxon>
        <taxon>Euteleostomi</taxon>
        <taxon>Mammalia</taxon>
        <taxon>Eutheria</taxon>
        <taxon>Euarchontoglires</taxon>
        <taxon>Glires</taxon>
        <taxon>Rodentia</taxon>
        <taxon>Myomorpha</taxon>
        <taxon>Muroidea</taxon>
        <taxon>Muridae</taxon>
        <taxon>Murinae</taxon>
        <taxon>Rattus</taxon>
    </lineage>
</organism>
<name>LYN_RAT</name>
<accession>Q07014</accession>
<accession>Q63320</accession>
<reference key="1">
    <citation type="journal article" date="1993" name="J. Immunol.">
        <title>Bacterially expressed rat p56lyn binds several proteins in rat basophilic leukemia cells including pp72, a tyrosine phosphorylated protein prominent in activated cells.</title>
        <authorList>
            <person name="Minoguchi K."/>
            <person name="Nishikata H."/>
            <person name="Siraganian R.P."/>
        </authorList>
    </citation>
    <scope>NUCLEOTIDE SEQUENCE [MRNA]</scope>
</reference>
<reference key="2">
    <citation type="journal article" date="1994" name="Gene">
        <title>The cDNAs encoding two forms of the LYN protein tyrosine kinase are expressed in rat mast cells and human myeloid cells.</title>
        <authorList>
            <person name="Rider L.G."/>
            <person name="Raben N."/>
            <person name="Miller L."/>
            <person name="Jelsema C."/>
        </authorList>
    </citation>
    <scope>NUCLEOTIDE SEQUENCE [MRNA]</scope>
</reference>
<reference key="3">
    <citation type="journal article" date="1997" name="J. Biol. Chem.">
        <title>The unique domain as the site on Lyn kinase for its constitutive association with the high affinity receptor for IgE.</title>
        <authorList>
            <person name="Vonakis B.M."/>
            <person name="Chen H."/>
            <person name="Haleem-Smith H."/>
            <person name="Metzger H."/>
        </authorList>
    </citation>
    <scope>NUCLEOTIDE SEQUENCE [MRNA]</scope>
</reference>
<reference key="4">
    <citation type="journal article" date="1998" name="Biochemistry">
        <title>Spontaneous autophosphorylation of Lyn tyrosine kinase at both its activation segment and C-terminal tail confers altered substrate specificity.</title>
        <authorList>
            <person name="Donella-Deana A."/>
            <person name="Cesaro L."/>
            <person name="Ruzzene M."/>
            <person name="Brunati A.M."/>
            <person name="Marin O."/>
            <person name="Pinna L.A."/>
        </authorList>
    </citation>
    <scope>PHOSPHORYLATION AT TYR-397 AND TYR-508</scope>
    <scope>CATALYTIC ACTIVITY</scope>
    <scope>AUTOPHOSPHORYLATION</scope>
    <scope>ACTIVITY REGULATION</scope>
    <scope>TISSUE SPECIFICITY</scope>
</reference>
<reference key="5">
    <citation type="journal article" date="2012" name="Nat. Commun.">
        <title>Quantitative maps of protein phosphorylation sites across 14 different rat organs and tissues.</title>
        <authorList>
            <person name="Lundby A."/>
            <person name="Secher A."/>
            <person name="Lage K."/>
            <person name="Nordsborg N.B."/>
            <person name="Dmytriyev A."/>
            <person name="Lundby C."/>
            <person name="Olsen J.V."/>
        </authorList>
    </citation>
    <scope>PHOSPHORYLATION [LARGE SCALE ANALYSIS] AT TYR-316 AND TYR-508</scope>
    <scope>IDENTIFICATION BY MASS SPECTROMETRY [LARGE SCALE ANALYSIS]</scope>
</reference>
<evidence type="ECO:0000250" key="1"/>
<evidence type="ECO:0000250" key="2">
    <source>
        <dbReference type="UniProtKB" id="P07948"/>
    </source>
</evidence>
<evidence type="ECO:0000250" key="3">
    <source>
        <dbReference type="UniProtKB" id="P25911"/>
    </source>
</evidence>
<evidence type="ECO:0000255" key="4">
    <source>
        <dbReference type="PROSITE-ProRule" id="PRU00159"/>
    </source>
</evidence>
<evidence type="ECO:0000255" key="5">
    <source>
        <dbReference type="PROSITE-ProRule" id="PRU00191"/>
    </source>
</evidence>
<evidence type="ECO:0000255" key="6">
    <source>
        <dbReference type="PROSITE-ProRule" id="PRU00192"/>
    </source>
</evidence>
<evidence type="ECO:0000255" key="7">
    <source>
        <dbReference type="PROSITE-ProRule" id="PRU10028"/>
    </source>
</evidence>
<evidence type="ECO:0000256" key="8">
    <source>
        <dbReference type="SAM" id="MobiDB-lite"/>
    </source>
</evidence>
<evidence type="ECO:0000269" key="9">
    <source>
    </source>
</evidence>
<evidence type="ECO:0000305" key="10"/>
<evidence type="ECO:0007744" key="11">
    <source>
    </source>
</evidence>
<proteinExistence type="evidence at protein level"/>
<protein>
    <recommendedName>
        <fullName>Tyrosine-protein kinase Lyn</fullName>
        <ecNumber>2.7.10.2</ecNumber>
    </recommendedName>
    <alternativeName>
        <fullName>V-yes-1 Yamaguchi sarcoma viral related oncogene homolog</fullName>
    </alternativeName>
    <alternativeName>
        <fullName>p53Lyn</fullName>
    </alternativeName>
    <alternativeName>
        <fullName>p56Lyn</fullName>
    </alternativeName>
</protein>
<dbReference type="EC" id="2.7.10.2"/>
<dbReference type="EMBL" id="L14951">
    <property type="protein sequence ID" value="AAA41549.1"/>
    <property type="molecule type" value="mRNA"/>
</dbReference>
<dbReference type="EMBL" id="L14782">
    <property type="protein sequence ID" value="AAA20944.1"/>
    <property type="molecule type" value="mRNA"/>
</dbReference>
<dbReference type="EMBL" id="L14823">
    <property type="protein sequence ID" value="AAA20945.1"/>
    <property type="molecule type" value="mRNA"/>
</dbReference>
<dbReference type="EMBL" id="AF000300">
    <property type="protein sequence ID" value="AAB71344.1"/>
    <property type="molecule type" value="mRNA"/>
</dbReference>
<dbReference type="EMBL" id="AF000301">
    <property type="protein sequence ID" value="AAB71345.1"/>
    <property type="molecule type" value="mRNA"/>
</dbReference>
<dbReference type="EMBL" id="AF000302">
    <property type="protein sequence ID" value="AAB71346.1"/>
    <property type="molecule type" value="mRNA"/>
</dbReference>
<dbReference type="PIR" id="I56160">
    <property type="entry name" value="I56160"/>
</dbReference>
<dbReference type="PIR" id="PT0198">
    <property type="entry name" value="PT0198"/>
</dbReference>
<dbReference type="RefSeq" id="NP_001104568.1">
    <molecule id="Q07014-2"/>
    <property type="nucleotide sequence ID" value="NM_001111098.1"/>
</dbReference>
<dbReference type="RefSeq" id="NP_110484.1">
    <molecule id="Q07014-1"/>
    <property type="nucleotide sequence ID" value="NM_030857.2"/>
</dbReference>
<dbReference type="RefSeq" id="XP_006237896.1">
    <molecule id="Q07014-1"/>
    <property type="nucleotide sequence ID" value="XM_006237834.5"/>
</dbReference>
<dbReference type="SMR" id="Q07014"/>
<dbReference type="BioGRID" id="249512">
    <property type="interactions" value="12"/>
</dbReference>
<dbReference type="ELM" id="Q07014"/>
<dbReference type="FunCoup" id="Q07014">
    <property type="interactions" value="1002"/>
</dbReference>
<dbReference type="IntAct" id="Q07014">
    <property type="interactions" value="8"/>
</dbReference>
<dbReference type="MINT" id="Q07014"/>
<dbReference type="STRING" id="10116.ENSRNOP00000011130"/>
<dbReference type="BindingDB" id="Q07014"/>
<dbReference type="ChEMBL" id="CHEMBL4363"/>
<dbReference type="iPTMnet" id="Q07014"/>
<dbReference type="PhosphoSitePlus" id="Q07014"/>
<dbReference type="SwissPalm" id="Q07014"/>
<dbReference type="jPOST" id="Q07014"/>
<dbReference type="PaxDb" id="10116-ENSRNOP00000011130"/>
<dbReference type="Ensembl" id="ENSRNOT00000011130.6">
    <molecule id="Q07014-1"/>
    <property type="protein sequence ID" value="ENSRNOP00000011130.4"/>
    <property type="gene ID" value="ENSRNOG00000008180.6"/>
</dbReference>
<dbReference type="GeneID" id="81515"/>
<dbReference type="KEGG" id="rno:81515"/>
<dbReference type="UCSC" id="RGD:621017">
    <molecule id="Q07014-1"/>
    <property type="organism name" value="rat"/>
</dbReference>
<dbReference type="AGR" id="RGD:621017"/>
<dbReference type="CTD" id="4067"/>
<dbReference type="RGD" id="621017">
    <property type="gene designation" value="Lyn"/>
</dbReference>
<dbReference type="eggNOG" id="KOG0197">
    <property type="taxonomic scope" value="Eukaryota"/>
</dbReference>
<dbReference type="GeneTree" id="ENSGT00940000158011"/>
<dbReference type="HOGENOM" id="CLU_000288_7_2_1"/>
<dbReference type="InParanoid" id="Q07014"/>
<dbReference type="OMA" id="TGNMGCI"/>
<dbReference type="OrthoDB" id="4062651at2759"/>
<dbReference type="PhylomeDB" id="Q07014"/>
<dbReference type="TreeFam" id="TF351634"/>
<dbReference type="BRENDA" id="2.7.10.2">
    <property type="organism ID" value="5301"/>
</dbReference>
<dbReference type="Reactome" id="R-RNO-114604">
    <property type="pathway name" value="GPVI-mediated activation cascade"/>
</dbReference>
<dbReference type="Reactome" id="R-RNO-1433557">
    <property type="pathway name" value="Signaling by SCF-KIT"/>
</dbReference>
<dbReference type="Reactome" id="R-RNO-1433559">
    <property type="pathway name" value="Regulation of KIT signaling"/>
</dbReference>
<dbReference type="Reactome" id="R-RNO-202733">
    <property type="pathway name" value="Cell surface interactions at the vascular wall"/>
</dbReference>
<dbReference type="Reactome" id="R-RNO-2029481">
    <property type="pathway name" value="FCGR activation"/>
</dbReference>
<dbReference type="Reactome" id="R-RNO-210990">
    <property type="pathway name" value="PECAM1 interactions"/>
</dbReference>
<dbReference type="Reactome" id="R-RNO-2454202">
    <property type="pathway name" value="Fc epsilon receptor (FCERI) signaling"/>
</dbReference>
<dbReference type="Reactome" id="R-RNO-2730905">
    <property type="pathway name" value="Role of LAT2/NTAL/LAB on calcium mobilization"/>
</dbReference>
<dbReference type="Reactome" id="R-RNO-2871796">
    <property type="pathway name" value="FCERI mediated MAPK activation"/>
</dbReference>
<dbReference type="Reactome" id="R-RNO-2871809">
    <property type="pathway name" value="FCERI mediated Ca+2 mobilization"/>
</dbReference>
<dbReference type="Reactome" id="R-RNO-2871837">
    <property type="pathway name" value="FCERI mediated NF-kB activation"/>
</dbReference>
<dbReference type="Reactome" id="R-RNO-389356">
    <property type="pathway name" value="Co-stimulation by CD28"/>
</dbReference>
<dbReference type="Reactome" id="R-RNO-389513">
    <property type="pathway name" value="Co-inhibition by CTLA4"/>
</dbReference>
<dbReference type="Reactome" id="R-RNO-3928662">
    <property type="pathway name" value="EPHB-mediated forward signaling"/>
</dbReference>
<dbReference type="Reactome" id="R-RNO-3928663">
    <property type="pathway name" value="EPHA-mediated growth cone collapse"/>
</dbReference>
<dbReference type="Reactome" id="R-RNO-3928665">
    <property type="pathway name" value="EPH-ephrin mediated repulsion of cells"/>
</dbReference>
<dbReference type="Reactome" id="R-RNO-5621480">
    <property type="pathway name" value="Dectin-2 family"/>
</dbReference>
<dbReference type="Reactome" id="R-RNO-5621575">
    <property type="pathway name" value="CD209 (DC-SIGN) signaling"/>
</dbReference>
<dbReference type="Reactome" id="R-RNO-5690714">
    <property type="pathway name" value="CD22 mediated BCR regulation"/>
</dbReference>
<dbReference type="Reactome" id="R-RNO-69231">
    <property type="pathway name" value="Cyclin D associated events in G1"/>
</dbReference>
<dbReference type="Reactome" id="R-RNO-75892">
    <property type="pathway name" value="Platelet Adhesion to exposed collagen"/>
</dbReference>
<dbReference type="Reactome" id="R-RNO-9006335">
    <property type="pathway name" value="Signaling by Erythropoietin"/>
</dbReference>
<dbReference type="Reactome" id="R-RNO-9027276">
    <property type="pathway name" value="Erythropoietin activates Phosphoinositide-3-kinase (PI3K)"/>
</dbReference>
<dbReference type="Reactome" id="R-RNO-9027284">
    <property type="pathway name" value="Erythropoietin activates RAS"/>
</dbReference>
<dbReference type="Reactome" id="R-RNO-912631">
    <property type="pathway name" value="Regulation of signaling by CBL"/>
</dbReference>
<dbReference type="Reactome" id="R-RNO-9674555">
    <property type="pathway name" value="Signaling by CSF3 (G-CSF)"/>
</dbReference>
<dbReference type="Reactome" id="R-RNO-9705462">
    <property type="pathway name" value="Inactivation of CSF3 (G-CSF) signaling"/>
</dbReference>
<dbReference type="Reactome" id="R-RNO-982772">
    <property type="pathway name" value="Growth hormone receptor signaling"/>
</dbReference>
<dbReference type="PRO" id="PR:Q07014"/>
<dbReference type="Proteomes" id="UP000002494">
    <property type="component" value="Chromosome 5"/>
</dbReference>
<dbReference type="Bgee" id="ENSRNOG00000008180">
    <property type="expression patterns" value="Expressed in spleen and 18 other cell types or tissues"/>
</dbReference>
<dbReference type="GO" id="GO:0005912">
    <property type="term" value="C:adherens junction"/>
    <property type="evidence" value="ECO:0000314"/>
    <property type="project" value="RGD"/>
</dbReference>
<dbReference type="GO" id="GO:0005737">
    <property type="term" value="C:cytoplasm"/>
    <property type="evidence" value="ECO:0000250"/>
    <property type="project" value="UniProtKB"/>
</dbReference>
<dbReference type="GO" id="GO:0009898">
    <property type="term" value="C:cytoplasmic side of plasma membrane"/>
    <property type="evidence" value="ECO:0000266"/>
    <property type="project" value="RGD"/>
</dbReference>
<dbReference type="GO" id="GO:0098978">
    <property type="term" value="C:glutamatergic synapse"/>
    <property type="evidence" value="ECO:0000314"/>
    <property type="project" value="SynGO"/>
</dbReference>
<dbReference type="GO" id="GO:0005794">
    <property type="term" value="C:Golgi apparatus"/>
    <property type="evidence" value="ECO:0000266"/>
    <property type="project" value="RGD"/>
</dbReference>
<dbReference type="GO" id="GO:0034666">
    <property type="term" value="C:integrin alpha2-beta1 complex"/>
    <property type="evidence" value="ECO:0000314"/>
    <property type="project" value="RGD"/>
</dbReference>
<dbReference type="GO" id="GO:0045121">
    <property type="term" value="C:membrane raft"/>
    <property type="evidence" value="ECO:0000266"/>
    <property type="project" value="RGD"/>
</dbReference>
<dbReference type="GO" id="GO:0030061">
    <property type="term" value="C:mitochondrial crista"/>
    <property type="evidence" value="ECO:0000314"/>
    <property type="project" value="RGD"/>
</dbReference>
<dbReference type="GO" id="GO:0031966">
    <property type="term" value="C:mitochondrial membrane"/>
    <property type="evidence" value="ECO:0000314"/>
    <property type="project" value="RGD"/>
</dbReference>
<dbReference type="GO" id="GO:0005634">
    <property type="term" value="C:nucleus"/>
    <property type="evidence" value="ECO:0000250"/>
    <property type="project" value="UniProtKB"/>
</dbReference>
<dbReference type="GO" id="GO:0048471">
    <property type="term" value="C:perinuclear region of cytoplasm"/>
    <property type="evidence" value="ECO:0000314"/>
    <property type="project" value="RGD"/>
</dbReference>
<dbReference type="GO" id="GO:0005886">
    <property type="term" value="C:plasma membrane"/>
    <property type="evidence" value="ECO:0000266"/>
    <property type="project" value="RGD"/>
</dbReference>
<dbReference type="GO" id="GO:0099091">
    <property type="term" value="C:postsynaptic specialization, intracellular component"/>
    <property type="evidence" value="ECO:0000314"/>
    <property type="project" value="SynGO"/>
</dbReference>
<dbReference type="GO" id="GO:0032991">
    <property type="term" value="C:protein-containing complex"/>
    <property type="evidence" value="ECO:0000266"/>
    <property type="project" value="RGD"/>
</dbReference>
<dbReference type="GO" id="GO:0005524">
    <property type="term" value="F:ATP binding"/>
    <property type="evidence" value="ECO:0007669"/>
    <property type="project" value="UniProtKB-KW"/>
</dbReference>
<dbReference type="GO" id="GO:0019899">
    <property type="term" value="F:enzyme binding"/>
    <property type="evidence" value="ECO:0000353"/>
    <property type="project" value="RGD"/>
</dbReference>
<dbReference type="GO" id="GO:0046875">
    <property type="term" value="F:ephrin receptor binding"/>
    <property type="evidence" value="ECO:0000266"/>
    <property type="project" value="RGD"/>
</dbReference>
<dbReference type="GO" id="GO:0043015">
    <property type="term" value="F:gamma-tubulin binding"/>
    <property type="evidence" value="ECO:0000314"/>
    <property type="project" value="RGD"/>
</dbReference>
<dbReference type="GO" id="GO:0043208">
    <property type="term" value="F:glycosphingolipid binding"/>
    <property type="evidence" value="ECO:0000353"/>
    <property type="project" value="RGD"/>
</dbReference>
<dbReference type="GO" id="GO:0005178">
    <property type="term" value="F:integrin binding"/>
    <property type="evidence" value="ECO:0000314"/>
    <property type="project" value="RGD"/>
</dbReference>
<dbReference type="GO" id="GO:0016301">
    <property type="term" value="F:kinase activity"/>
    <property type="evidence" value="ECO:0000304"/>
    <property type="project" value="RGD"/>
</dbReference>
<dbReference type="GO" id="GO:0004715">
    <property type="term" value="F:non-membrane spanning protein tyrosine kinase activity"/>
    <property type="evidence" value="ECO:0000266"/>
    <property type="project" value="RGD"/>
</dbReference>
<dbReference type="GO" id="GO:0141038">
    <property type="term" value="F:phosphatidylinositol 3-kinase activator activity"/>
    <property type="evidence" value="ECO:0000266"/>
    <property type="project" value="RGD"/>
</dbReference>
<dbReference type="GO" id="GO:0051219">
    <property type="term" value="F:phosphoprotein binding"/>
    <property type="evidence" value="ECO:0000353"/>
    <property type="project" value="RGD"/>
</dbReference>
<dbReference type="GO" id="GO:0140031">
    <property type="term" value="F:phosphorylation-dependent protein binding"/>
    <property type="evidence" value="ECO:0000266"/>
    <property type="project" value="RGD"/>
</dbReference>
<dbReference type="GO" id="GO:0005161">
    <property type="term" value="F:platelet-derived growth factor receptor binding"/>
    <property type="evidence" value="ECO:0000353"/>
    <property type="project" value="RGD"/>
</dbReference>
<dbReference type="GO" id="GO:0004672">
    <property type="term" value="F:protein kinase activity"/>
    <property type="evidence" value="ECO:0000266"/>
    <property type="project" value="RGD"/>
</dbReference>
<dbReference type="GO" id="GO:0004713">
    <property type="term" value="F:protein tyrosine kinase activity"/>
    <property type="evidence" value="ECO:0000314"/>
    <property type="project" value="RGD"/>
</dbReference>
<dbReference type="GO" id="GO:0044877">
    <property type="term" value="F:protein-containing complex binding"/>
    <property type="evidence" value="ECO:0000314"/>
    <property type="project" value="RGD"/>
</dbReference>
<dbReference type="GO" id="GO:0097110">
    <property type="term" value="F:scaffold protein binding"/>
    <property type="evidence" value="ECO:0000266"/>
    <property type="project" value="RGD"/>
</dbReference>
<dbReference type="GO" id="GO:0017124">
    <property type="term" value="F:SH3 domain binding"/>
    <property type="evidence" value="ECO:0000266"/>
    <property type="project" value="RGD"/>
</dbReference>
<dbReference type="GO" id="GO:0030546">
    <property type="term" value="F:signaling receptor activator activity"/>
    <property type="evidence" value="ECO:0000266"/>
    <property type="project" value="RGD"/>
</dbReference>
<dbReference type="GO" id="GO:0005102">
    <property type="term" value="F:signaling receptor binding"/>
    <property type="evidence" value="ECO:0000353"/>
    <property type="project" value="RGD"/>
</dbReference>
<dbReference type="GO" id="GO:0044325">
    <property type="term" value="F:transmembrane transporter binding"/>
    <property type="evidence" value="ECO:0000266"/>
    <property type="project" value="RGD"/>
</dbReference>
<dbReference type="GO" id="GO:0031625">
    <property type="term" value="F:ubiquitin protein ligase binding"/>
    <property type="evidence" value="ECO:0000353"/>
    <property type="project" value="RGD"/>
</dbReference>
<dbReference type="GO" id="GO:0002250">
    <property type="term" value="P:adaptive immune response"/>
    <property type="evidence" value="ECO:0007669"/>
    <property type="project" value="UniProtKB-KW"/>
</dbReference>
<dbReference type="GO" id="GO:0006914">
    <property type="term" value="P:autophagy"/>
    <property type="evidence" value="ECO:0000266"/>
    <property type="project" value="RGD"/>
</dbReference>
<dbReference type="GO" id="GO:0001782">
    <property type="term" value="P:B cell homeostasis"/>
    <property type="evidence" value="ECO:0000250"/>
    <property type="project" value="UniProtKB"/>
</dbReference>
<dbReference type="GO" id="GO:0050853">
    <property type="term" value="P:B cell receptor signaling pathway"/>
    <property type="evidence" value="ECO:0000266"/>
    <property type="project" value="RGD"/>
</dbReference>
<dbReference type="GO" id="GO:0038159">
    <property type="term" value="P:C-X-C chemokine receptor CXCR4 signaling pathway"/>
    <property type="evidence" value="ECO:0000266"/>
    <property type="project" value="RGD"/>
</dbReference>
<dbReference type="GO" id="GO:0000902">
    <property type="term" value="P:cell morphogenesis"/>
    <property type="evidence" value="ECO:0000266"/>
    <property type="project" value="RGD"/>
</dbReference>
<dbReference type="GO" id="GO:0007169">
    <property type="term" value="P:cell surface receptor protein tyrosine kinase signaling pathway"/>
    <property type="evidence" value="ECO:0000266"/>
    <property type="project" value="RGD"/>
</dbReference>
<dbReference type="GO" id="GO:0034605">
    <property type="term" value="P:cellular response to heat"/>
    <property type="evidence" value="ECO:0000270"/>
    <property type="project" value="RGD"/>
</dbReference>
<dbReference type="GO" id="GO:0071300">
    <property type="term" value="P:cellular response to retinoic acid"/>
    <property type="evidence" value="ECO:0000266"/>
    <property type="project" value="RGD"/>
</dbReference>
<dbReference type="GO" id="GO:0097028">
    <property type="term" value="P:dendritic cell differentiation"/>
    <property type="evidence" value="ECO:0000250"/>
    <property type="project" value="UniProtKB"/>
</dbReference>
<dbReference type="GO" id="GO:0000077">
    <property type="term" value="P:DNA damage checkpoint signaling"/>
    <property type="evidence" value="ECO:0000266"/>
    <property type="project" value="RGD"/>
</dbReference>
<dbReference type="GO" id="GO:0006974">
    <property type="term" value="P:DNA damage response"/>
    <property type="evidence" value="ECO:0000266"/>
    <property type="project" value="RGD"/>
</dbReference>
<dbReference type="GO" id="GO:0030222">
    <property type="term" value="P:eosinophil differentiation"/>
    <property type="evidence" value="ECO:0000266"/>
    <property type="project" value="RGD"/>
</dbReference>
<dbReference type="GO" id="GO:0048013">
    <property type="term" value="P:ephrin receptor signaling pathway"/>
    <property type="evidence" value="ECO:0000266"/>
    <property type="project" value="RGD"/>
</dbReference>
<dbReference type="GO" id="GO:0030218">
    <property type="term" value="P:erythrocyte differentiation"/>
    <property type="evidence" value="ECO:0000250"/>
    <property type="project" value="UniProtKB"/>
</dbReference>
<dbReference type="GO" id="GO:0015908">
    <property type="term" value="P:fatty acid transport"/>
    <property type="evidence" value="ECO:0000266"/>
    <property type="project" value="RGD"/>
</dbReference>
<dbReference type="GO" id="GO:0002774">
    <property type="term" value="P:Fc receptor mediated inhibitory signaling pathway"/>
    <property type="evidence" value="ECO:0000250"/>
    <property type="project" value="UniProtKB"/>
</dbReference>
<dbReference type="GO" id="GO:0002431">
    <property type="term" value="P:Fc receptor mediated stimulatory signaling pathway"/>
    <property type="evidence" value="ECO:0000250"/>
    <property type="project" value="UniProtKB"/>
</dbReference>
<dbReference type="GO" id="GO:0002244">
    <property type="term" value="P:hematopoietic progenitor cell differentiation"/>
    <property type="evidence" value="ECO:0000266"/>
    <property type="project" value="RGD"/>
</dbReference>
<dbReference type="GO" id="GO:0030097">
    <property type="term" value="P:hemopoiesis"/>
    <property type="evidence" value="ECO:0000266"/>
    <property type="project" value="RGD"/>
</dbReference>
<dbReference type="GO" id="GO:0002553">
    <property type="term" value="P:histamine secretion by mast cell"/>
    <property type="evidence" value="ECO:0000315"/>
    <property type="project" value="RGD"/>
</dbReference>
<dbReference type="GO" id="GO:0002768">
    <property type="term" value="P:immune response-regulating cell surface receptor signaling pathway"/>
    <property type="evidence" value="ECO:0000250"/>
    <property type="project" value="UniProtKB"/>
</dbReference>
<dbReference type="GO" id="GO:0045087">
    <property type="term" value="P:innate immune response"/>
    <property type="evidence" value="ECO:0007669"/>
    <property type="project" value="UniProtKB-KW"/>
</dbReference>
<dbReference type="GO" id="GO:0038043">
    <property type="term" value="P:interleukin-5-mediated signaling pathway"/>
    <property type="evidence" value="ECO:0000266"/>
    <property type="project" value="RGD"/>
</dbReference>
<dbReference type="GO" id="GO:0035556">
    <property type="term" value="P:intracellular signal transduction"/>
    <property type="evidence" value="ECO:0000266"/>
    <property type="project" value="RGD"/>
</dbReference>
<dbReference type="GO" id="GO:0031663">
    <property type="term" value="P:lipopolysaccharide-mediated signaling pathway"/>
    <property type="evidence" value="ECO:0000250"/>
    <property type="project" value="UniProtKB"/>
</dbReference>
<dbReference type="GO" id="GO:0030889">
    <property type="term" value="P:negative regulation of B cell proliferation"/>
    <property type="evidence" value="ECO:0000266"/>
    <property type="project" value="RGD"/>
</dbReference>
<dbReference type="GO" id="GO:0008285">
    <property type="term" value="P:negative regulation of cell population proliferation"/>
    <property type="evidence" value="ECO:0000250"/>
    <property type="project" value="UniProtKB"/>
</dbReference>
<dbReference type="GO" id="GO:0070373">
    <property type="term" value="P:negative regulation of ERK1 and ERK2 cascade"/>
    <property type="evidence" value="ECO:0000250"/>
    <property type="project" value="UniProtKB"/>
</dbReference>
<dbReference type="GO" id="GO:1902532">
    <property type="term" value="P:negative regulation of intracellular signal transduction"/>
    <property type="evidence" value="ECO:0000250"/>
    <property type="project" value="UniProtKB"/>
</dbReference>
<dbReference type="GO" id="GO:0043407">
    <property type="term" value="P:negative regulation of MAP kinase activity"/>
    <property type="evidence" value="ECO:0000250"/>
    <property type="project" value="UniProtKB"/>
</dbReference>
<dbReference type="GO" id="GO:0070667">
    <property type="term" value="P:negative regulation of mast cell proliferation"/>
    <property type="evidence" value="ECO:0000250"/>
    <property type="project" value="UniProtKB"/>
</dbReference>
<dbReference type="GO" id="GO:0002762">
    <property type="term" value="P:negative regulation of myeloid leukocyte differentiation"/>
    <property type="evidence" value="ECO:0000266"/>
    <property type="project" value="RGD"/>
</dbReference>
<dbReference type="GO" id="GO:0001933">
    <property type="term" value="P:negative regulation of protein phosphorylation"/>
    <property type="evidence" value="ECO:0000250"/>
    <property type="project" value="UniProtKB"/>
</dbReference>
<dbReference type="GO" id="GO:0034136">
    <property type="term" value="P:negative regulation of toll-like receptor 2 signaling pathway"/>
    <property type="evidence" value="ECO:0000250"/>
    <property type="project" value="UniProtKB"/>
</dbReference>
<dbReference type="GO" id="GO:0034144">
    <property type="term" value="P:negative regulation of toll-like receptor 4 signaling pathway"/>
    <property type="evidence" value="ECO:0000250"/>
    <property type="project" value="UniProtKB"/>
</dbReference>
<dbReference type="GO" id="GO:0150076">
    <property type="term" value="P:neuroinflammatory response"/>
    <property type="evidence" value="ECO:0000266"/>
    <property type="project" value="RGD"/>
</dbReference>
<dbReference type="GO" id="GO:0031175">
    <property type="term" value="P:neuron projection development"/>
    <property type="evidence" value="ECO:0000266"/>
    <property type="project" value="RGD"/>
</dbReference>
<dbReference type="GO" id="GO:0014003">
    <property type="term" value="P:oligodendrocyte development"/>
    <property type="evidence" value="ECO:0000270"/>
    <property type="project" value="RGD"/>
</dbReference>
<dbReference type="GO" id="GO:0002576">
    <property type="term" value="P:platelet degranulation"/>
    <property type="evidence" value="ECO:0000250"/>
    <property type="project" value="UniProtKB"/>
</dbReference>
<dbReference type="GO" id="GO:1902993">
    <property type="term" value="P:positive regulation of amyloid precursor protein catabolic process"/>
    <property type="evidence" value="ECO:0000266"/>
    <property type="project" value="RGD"/>
</dbReference>
<dbReference type="GO" id="GO:0030335">
    <property type="term" value="P:positive regulation of cell migration"/>
    <property type="evidence" value="ECO:0000266"/>
    <property type="project" value="RGD"/>
</dbReference>
<dbReference type="GO" id="GO:0008284">
    <property type="term" value="P:positive regulation of cell population proliferation"/>
    <property type="evidence" value="ECO:0000250"/>
    <property type="project" value="UniProtKB"/>
</dbReference>
<dbReference type="GO" id="GO:2000670">
    <property type="term" value="P:positive regulation of dendritic cell apoptotic process"/>
    <property type="evidence" value="ECO:0000250"/>
    <property type="project" value="UniProtKB"/>
</dbReference>
<dbReference type="GO" id="GO:0060369">
    <property type="term" value="P:positive regulation of Fc receptor mediated stimulatory signaling pathway"/>
    <property type="evidence" value="ECO:0000315"/>
    <property type="project" value="RGD"/>
</dbReference>
<dbReference type="GO" id="GO:0060252">
    <property type="term" value="P:positive regulation of glial cell proliferation"/>
    <property type="evidence" value="ECO:0000314"/>
    <property type="project" value="RGD"/>
</dbReference>
<dbReference type="GO" id="GO:0043410">
    <property type="term" value="P:positive regulation of MAPK cascade"/>
    <property type="evidence" value="ECO:0000266"/>
    <property type="project" value="RGD"/>
</dbReference>
<dbReference type="GO" id="GO:0070668">
    <property type="term" value="P:positive regulation of mast cell proliferation"/>
    <property type="evidence" value="ECO:0000266"/>
    <property type="project" value="RGD"/>
</dbReference>
<dbReference type="GO" id="GO:0010976">
    <property type="term" value="P:positive regulation of neuron projection development"/>
    <property type="evidence" value="ECO:0000266"/>
    <property type="project" value="RGD"/>
</dbReference>
<dbReference type="GO" id="GO:0070447">
    <property type="term" value="P:positive regulation of oligodendrocyte progenitor proliferation"/>
    <property type="evidence" value="ECO:0000315"/>
    <property type="project" value="RGD"/>
</dbReference>
<dbReference type="GO" id="GO:0042327">
    <property type="term" value="P:positive regulation of phosphorylation"/>
    <property type="evidence" value="ECO:0000315"/>
    <property type="project" value="RGD"/>
</dbReference>
<dbReference type="GO" id="GO:0002902">
    <property type="term" value="P:regulation of B cell apoptotic process"/>
    <property type="evidence" value="ECO:0000266"/>
    <property type="project" value="RGD"/>
</dbReference>
<dbReference type="GO" id="GO:0050855">
    <property type="term" value="P:regulation of B cell receptor signaling pathway"/>
    <property type="evidence" value="ECO:0000250"/>
    <property type="project" value="UniProtKB"/>
</dbReference>
<dbReference type="GO" id="GO:0033628">
    <property type="term" value="P:regulation of cell adhesion mediated by integrin"/>
    <property type="evidence" value="ECO:0000266"/>
    <property type="project" value="RGD"/>
</dbReference>
<dbReference type="GO" id="GO:0001817">
    <property type="term" value="P:regulation of cytokine production"/>
    <property type="evidence" value="ECO:0000250"/>
    <property type="project" value="UniProtKB"/>
</dbReference>
<dbReference type="GO" id="GO:0070372">
    <property type="term" value="P:regulation of ERK1 and ERK2 cascade"/>
    <property type="evidence" value="ECO:0000250"/>
    <property type="project" value="UniProtKB"/>
</dbReference>
<dbReference type="GO" id="GO:0045646">
    <property type="term" value="P:regulation of erythrocyte differentiation"/>
    <property type="evidence" value="ECO:0000250"/>
    <property type="project" value="UniProtKB"/>
</dbReference>
<dbReference type="GO" id="GO:0050727">
    <property type="term" value="P:regulation of inflammatory response"/>
    <property type="evidence" value="ECO:0000266"/>
    <property type="project" value="RGD"/>
</dbReference>
<dbReference type="GO" id="GO:0033003">
    <property type="term" value="P:regulation of mast cell activation"/>
    <property type="evidence" value="ECO:0000250"/>
    <property type="project" value="UniProtKB"/>
</dbReference>
<dbReference type="GO" id="GO:0043304">
    <property type="term" value="P:regulation of mast cell degranulation"/>
    <property type="evidence" value="ECO:0000250"/>
    <property type="project" value="UniProtKB"/>
</dbReference>
<dbReference type="GO" id="GO:0090025">
    <property type="term" value="P:regulation of monocyte chemotaxis"/>
    <property type="evidence" value="ECO:0000266"/>
    <property type="project" value="RGD"/>
</dbReference>
<dbReference type="GO" id="GO:0090330">
    <property type="term" value="P:regulation of platelet aggregation"/>
    <property type="evidence" value="ECO:0000250"/>
    <property type="project" value="UniProtKB"/>
</dbReference>
<dbReference type="GO" id="GO:0051279">
    <property type="term" value="P:regulation of release of sequestered calcium ion into cytosol"/>
    <property type="evidence" value="ECO:0000315"/>
    <property type="project" value="RGD"/>
</dbReference>
<dbReference type="GO" id="GO:0043200">
    <property type="term" value="P:response to amino acid"/>
    <property type="evidence" value="ECO:0000270"/>
    <property type="project" value="RGD"/>
</dbReference>
<dbReference type="GO" id="GO:0048678">
    <property type="term" value="P:response to axon injury"/>
    <property type="evidence" value="ECO:0000270"/>
    <property type="project" value="RGD"/>
</dbReference>
<dbReference type="GO" id="GO:0009743">
    <property type="term" value="P:response to carbohydrate"/>
    <property type="evidence" value="ECO:0000270"/>
    <property type="project" value="RGD"/>
</dbReference>
<dbReference type="GO" id="GO:0009725">
    <property type="term" value="P:response to hormone"/>
    <property type="evidence" value="ECO:0000250"/>
    <property type="project" value="UniProtKB"/>
</dbReference>
<dbReference type="GO" id="GO:0032868">
    <property type="term" value="P:response to insulin"/>
    <property type="evidence" value="ECO:0000270"/>
    <property type="project" value="RGD"/>
</dbReference>
<dbReference type="GO" id="GO:0043434">
    <property type="term" value="P:response to peptide hormone"/>
    <property type="evidence" value="ECO:0000270"/>
    <property type="project" value="RGD"/>
</dbReference>
<dbReference type="GO" id="GO:0006991">
    <property type="term" value="P:response to sterol depletion"/>
    <property type="evidence" value="ECO:0000270"/>
    <property type="project" value="RGD"/>
</dbReference>
<dbReference type="GO" id="GO:0009636">
    <property type="term" value="P:response to toxic substance"/>
    <property type="evidence" value="ECO:0000270"/>
    <property type="project" value="RGD"/>
</dbReference>
<dbReference type="GO" id="GO:0009410">
    <property type="term" value="P:response to xenobiotic stimulus"/>
    <property type="evidence" value="ECO:0000270"/>
    <property type="project" value="RGD"/>
</dbReference>
<dbReference type="GO" id="GO:0002513">
    <property type="term" value="P:tolerance induction to self antigen"/>
    <property type="evidence" value="ECO:0000250"/>
    <property type="project" value="UniProtKB"/>
</dbReference>
<dbReference type="GO" id="GO:0034142">
    <property type="term" value="P:toll-like receptor 4 signaling pathway"/>
    <property type="evidence" value="ECO:0000266"/>
    <property type="project" value="RGD"/>
</dbReference>
<dbReference type="CDD" id="cd05072">
    <property type="entry name" value="PTKc_Lyn"/>
    <property type="match status" value="1"/>
</dbReference>
<dbReference type="CDD" id="cd10364">
    <property type="entry name" value="SH2_Src_Lyn"/>
    <property type="match status" value="1"/>
</dbReference>
<dbReference type="CDD" id="cd12004">
    <property type="entry name" value="SH3_Lyn"/>
    <property type="match status" value="1"/>
</dbReference>
<dbReference type="FunFam" id="1.10.510.10:FF:000553">
    <property type="entry name" value="Tyrosine-protein kinase"/>
    <property type="match status" value="1"/>
</dbReference>
<dbReference type="FunFam" id="2.30.30.40:FF:000095">
    <property type="entry name" value="Tyrosine-protein kinase"/>
    <property type="match status" value="1"/>
</dbReference>
<dbReference type="FunFam" id="3.30.200.20:FF:000036">
    <property type="entry name" value="Tyrosine-protein kinase"/>
    <property type="match status" value="1"/>
</dbReference>
<dbReference type="FunFam" id="3.30.505.10:FF:000010">
    <property type="entry name" value="Tyrosine-protein kinase"/>
    <property type="match status" value="1"/>
</dbReference>
<dbReference type="Gene3D" id="3.30.200.20">
    <property type="entry name" value="Phosphorylase Kinase, domain 1"/>
    <property type="match status" value="1"/>
</dbReference>
<dbReference type="Gene3D" id="3.30.505.10">
    <property type="entry name" value="SH2 domain"/>
    <property type="match status" value="1"/>
</dbReference>
<dbReference type="Gene3D" id="2.30.30.40">
    <property type="entry name" value="SH3 Domains"/>
    <property type="match status" value="1"/>
</dbReference>
<dbReference type="Gene3D" id="1.10.510.10">
    <property type="entry name" value="Transferase(Phosphotransferase) domain 1"/>
    <property type="match status" value="1"/>
</dbReference>
<dbReference type="InterPro" id="IPR011009">
    <property type="entry name" value="Kinase-like_dom_sf"/>
</dbReference>
<dbReference type="InterPro" id="IPR035852">
    <property type="entry name" value="Lyn_SH2"/>
</dbReference>
<dbReference type="InterPro" id="IPR035748">
    <property type="entry name" value="Lyn_SH3"/>
</dbReference>
<dbReference type="InterPro" id="IPR050198">
    <property type="entry name" value="Non-receptor_tyrosine_kinases"/>
</dbReference>
<dbReference type="InterPro" id="IPR000719">
    <property type="entry name" value="Prot_kinase_dom"/>
</dbReference>
<dbReference type="InterPro" id="IPR017441">
    <property type="entry name" value="Protein_kinase_ATP_BS"/>
</dbReference>
<dbReference type="InterPro" id="IPR001245">
    <property type="entry name" value="Ser-Thr/Tyr_kinase_cat_dom"/>
</dbReference>
<dbReference type="InterPro" id="IPR000980">
    <property type="entry name" value="SH2"/>
</dbReference>
<dbReference type="InterPro" id="IPR036860">
    <property type="entry name" value="SH2_dom_sf"/>
</dbReference>
<dbReference type="InterPro" id="IPR036028">
    <property type="entry name" value="SH3-like_dom_sf"/>
</dbReference>
<dbReference type="InterPro" id="IPR001452">
    <property type="entry name" value="SH3_domain"/>
</dbReference>
<dbReference type="InterPro" id="IPR008266">
    <property type="entry name" value="Tyr_kinase_AS"/>
</dbReference>
<dbReference type="InterPro" id="IPR020635">
    <property type="entry name" value="Tyr_kinase_cat_dom"/>
</dbReference>
<dbReference type="PANTHER" id="PTHR24418">
    <property type="entry name" value="TYROSINE-PROTEIN KINASE"/>
    <property type="match status" value="1"/>
</dbReference>
<dbReference type="Pfam" id="PF07714">
    <property type="entry name" value="PK_Tyr_Ser-Thr"/>
    <property type="match status" value="1"/>
</dbReference>
<dbReference type="Pfam" id="PF00017">
    <property type="entry name" value="SH2"/>
    <property type="match status" value="1"/>
</dbReference>
<dbReference type="Pfam" id="PF00018">
    <property type="entry name" value="SH3_1"/>
    <property type="match status" value="1"/>
</dbReference>
<dbReference type="PRINTS" id="PR00401">
    <property type="entry name" value="SH2DOMAIN"/>
</dbReference>
<dbReference type="PRINTS" id="PR00452">
    <property type="entry name" value="SH3DOMAIN"/>
</dbReference>
<dbReference type="PRINTS" id="PR00109">
    <property type="entry name" value="TYRKINASE"/>
</dbReference>
<dbReference type="SMART" id="SM00252">
    <property type="entry name" value="SH2"/>
    <property type="match status" value="1"/>
</dbReference>
<dbReference type="SMART" id="SM00326">
    <property type="entry name" value="SH3"/>
    <property type="match status" value="1"/>
</dbReference>
<dbReference type="SMART" id="SM00219">
    <property type="entry name" value="TyrKc"/>
    <property type="match status" value="1"/>
</dbReference>
<dbReference type="SUPFAM" id="SSF56112">
    <property type="entry name" value="Protein kinase-like (PK-like)"/>
    <property type="match status" value="1"/>
</dbReference>
<dbReference type="SUPFAM" id="SSF55550">
    <property type="entry name" value="SH2 domain"/>
    <property type="match status" value="1"/>
</dbReference>
<dbReference type="SUPFAM" id="SSF50044">
    <property type="entry name" value="SH3-domain"/>
    <property type="match status" value="1"/>
</dbReference>
<dbReference type="PROSITE" id="PS00107">
    <property type="entry name" value="PROTEIN_KINASE_ATP"/>
    <property type="match status" value="1"/>
</dbReference>
<dbReference type="PROSITE" id="PS50011">
    <property type="entry name" value="PROTEIN_KINASE_DOM"/>
    <property type="match status" value="1"/>
</dbReference>
<dbReference type="PROSITE" id="PS00109">
    <property type="entry name" value="PROTEIN_KINASE_TYR"/>
    <property type="match status" value="1"/>
</dbReference>
<dbReference type="PROSITE" id="PS50001">
    <property type="entry name" value="SH2"/>
    <property type="match status" value="1"/>
</dbReference>
<dbReference type="PROSITE" id="PS50002">
    <property type="entry name" value="SH3"/>
    <property type="match status" value="1"/>
</dbReference>
<gene>
    <name type="primary">Lyn</name>
</gene>